<feature type="chain" id="PRO_0000231283" description="UDP-N-acetylglucosamine 1-carboxyvinyltransferase 2">
    <location>
        <begin position="1"/>
        <end position="420"/>
    </location>
</feature>
<feature type="active site" description="Proton donor" evidence="1">
    <location>
        <position position="116"/>
    </location>
</feature>
<feature type="binding site" evidence="1">
    <location>
        <begin position="22"/>
        <end position="23"/>
    </location>
    <ligand>
        <name>phosphoenolpyruvate</name>
        <dbReference type="ChEBI" id="CHEBI:58702"/>
    </ligand>
</feature>
<feature type="binding site" evidence="1">
    <location>
        <position position="92"/>
    </location>
    <ligand>
        <name>UDP-N-acetyl-alpha-D-glucosamine</name>
        <dbReference type="ChEBI" id="CHEBI:57705"/>
    </ligand>
</feature>
<feature type="binding site" evidence="1">
    <location>
        <begin position="121"/>
        <end position="125"/>
    </location>
    <ligand>
        <name>UDP-N-acetyl-alpha-D-glucosamine</name>
        <dbReference type="ChEBI" id="CHEBI:57705"/>
    </ligand>
</feature>
<feature type="binding site" evidence="1">
    <location>
        <position position="307"/>
    </location>
    <ligand>
        <name>UDP-N-acetyl-alpha-D-glucosamine</name>
        <dbReference type="ChEBI" id="CHEBI:57705"/>
    </ligand>
</feature>
<feature type="binding site" evidence="1">
    <location>
        <position position="329"/>
    </location>
    <ligand>
        <name>UDP-N-acetyl-alpha-D-glucosamine</name>
        <dbReference type="ChEBI" id="CHEBI:57705"/>
    </ligand>
</feature>
<feature type="modified residue" description="2-(S-cysteinyl)pyruvic acid O-phosphothioketal" evidence="1">
    <location>
        <position position="116"/>
    </location>
</feature>
<organism>
    <name type="scientific">Streptococcus thermophilus (strain CNRZ 1066)</name>
    <dbReference type="NCBI Taxonomy" id="299768"/>
    <lineage>
        <taxon>Bacteria</taxon>
        <taxon>Bacillati</taxon>
        <taxon>Bacillota</taxon>
        <taxon>Bacilli</taxon>
        <taxon>Lactobacillales</taxon>
        <taxon>Streptococcaceae</taxon>
        <taxon>Streptococcus</taxon>
    </lineage>
</organism>
<evidence type="ECO:0000255" key="1">
    <source>
        <dbReference type="HAMAP-Rule" id="MF_00111"/>
    </source>
</evidence>
<evidence type="ECO:0000305" key="2"/>
<dbReference type="EC" id="2.5.1.7" evidence="1"/>
<dbReference type="EMBL" id="CP000024">
    <property type="protein sequence ID" value="AAV63090.1"/>
    <property type="status" value="ALT_INIT"/>
    <property type="molecule type" value="Genomic_DNA"/>
</dbReference>
<dbReference type="RefSeq" id="WP_041827084.1">
    <property type="nucleotide sequence ID" value="NC_006449.1"/>
</dbReference>
<dbReference type="SMR" id="Q5LYL3"/>
<dbReference type="KEGG" id="stc:str1560"/>
<dbReference type="HOGENOM" id="CLU_027387_0_0_9"/>
<dbReference type="UniPathway" id="UPA00219"/>
<dbReference type="GO" id="GO:0005737">
    <property type="term" value="C:cytoplasm"/>
    <property type="evidence" value="ECO:0007669"/>
    <property type="project" value="UniProtKB-SubCell"/>
</dbReference>
<dbReference type="GO" id="GO:0008760">
    <property type="term" value="F:UDP-N-acetylglucosamine 1-carboxyvinyltransferase activity"/>
    <property type="evidence" value="ECO:0007669"/>
    <property type="project" value="UniProtKB-UniRule"/>
</dbReference>
<dbReference type="GO" id="GO:0051301">
    <property type="term" value="P:cell division"/>
    <property type="evidence" value="ECO:0007669"/>
    <property type="project" value="UniProtKB-KW"/>
</dbReference>
<dbReference type="GO" id="GO:0071555">
    <property type="term" value="P:cell wall organization"/>
    <property type="evidence" value="ECO:0007669"/>
    <property type="project" value="UniProtKB-KW"/>
</dbReference>
<dbReference type="GO" id="GO:0009252">
    <property type="term" value="P:peptidoglycan biosynthetic process"/>
    <property type="evidence" value="ECO:0007669"/>
    <property type="project" value="UniProtKB-UniRule"/>
</dbReference>
<dbReference type="GO" id="GO:0008360">
    <property type="term" value="P:regulation of cell shape"/>
    <property type="evidence" value="ECO:0007669"/>
    <property type="project" value="UniProtKB-KW"/>
</dbReference>
<dbReference type="GO" id="GO:0019277">
    <property type="term" value="P:UDP-N-acetylgalactosamine biosynthetic process"/>
    <property type="evidence" value="ECO:0007669"/>
    <property type="project" value="InterPro"/>
</dbReference>
<dbReference type="CDD" id="cd01555">
    <property type="entry name" value="UdpNAET"/>
    <property type="match status" value="1"/>
</dbReference>
<dbReference type="FunFam" id="3.65.10.10:FF:000001">
    <property type="entry name" value="UDP-N-acetylglucosamine 1-carboxyvinyltransferase"/>
    <property type="match status" value="1"/>
</dbReference>
<dbReference type="Gene3D" id="3.65.10.10">
    <property type="entry name" value="Enolpyruvate transferase domain"/>
    <property type="match status" value="2"/>
</dbReference>
<dbReference type="HAMAP" id="MF_00111">
    <property type="entry name" value="MurA"/>
    <property type="match status" value="1"/>
</dbReference>
<dbReference type="InterPro" id="IPR001986">
    <property type="entry name" value="Enolpyruvate_Tfrase_dom"/>
</dbReference>
<dbReference type="InterPro" id="IPR036968">
    <property type="entry name" value="Enolpyruvate_Tfrase_sf"/>
</dbReference>
<dbReference type="InterPro" id="IPR050068">
    <property type="entry name" value="MurA_subfamily"/>
</dbReference>
<dbReference type="InterPro" id="IPR013792">
    <property type="entry name" value="RNA3'P_cycl/enolpyr_Trfase_a/b"/>
</dbReference>
<dbReference type="InterPro" id="IPR005750">
    <property type="entry name" value="UDP_GlcNAc_COvinyl_MurA"/>
</dbReference>
<dbReference type="NCBIfam" id="TIGR01072">
    <property type="entry name" value="murA"/>
    <property type="match status" value="1"/>
</dbReference>
<dbReference type="NCBIfam" id="NF006873">
    <property type="entry name" value="PRK09369.1"/>
    <property type="match status" value="1"/>
</dbReference>
<dbReference type="NCBIfam" id="NF009470">
    <property type="entry name" value="PRK12830.1"/>
    <property type="match status" value="1"/>
</dbReference>
<dbReference type="PANTHER" id="PTHR43783">
    <property type="entry name" value="UDP-N-ACETYLGLUCOSAMINE 1-CARBOXYVINYLTRANSFERASE"/>
    <property type="match status" value="1"/>
</dbReference>
<dbReference type="PANTHER" id="PTHR43783:SF2">
    <property type="entry name" value="UDP-N-ACETYLGLUCOSAMINE 1-CARBOXYVINYLTRANSFERASE 2"/>
    <property type="match status" value="1"/>
</dbReference>
<dbReference type="Pfam" id="PF00275">
    <property type="entry name" value="EPSP_synthase"/>
    <property type="match status" value="1"/>
</dbReference>
<dbReference type="SUPFAM" id="SSF55205">
    <property type="entry name" value="EPT/RTPC-like"/>
    <property type="match status" value="1"/>
</dbReference>
<gene>
    <name evidence="1" type="primary">murA2</name>
    <name type="synonym">murZ</name>
    <name type="ordered locus">str1560</name>
</gene>
<comment type="function">
    <text evidence="1">Cell wall formation. Adds enolpyruvyl to UDP-N-acetylglucosamine.</text>
</comment>
<comment type="catalytic activity">
    <reaction evidence="1">
        <text>phosphoenolpyruvate + UDP-N-acetyl-alpha-D-glucosamine = UDP-N-acetyl-3-O-(1-carboxyvinyl)-alpha-D-glucosamine + phosphate</text>
        <dbReference type="Rhea" id="RHEA:18681"/>
        <dbReference type="ChEBI" id="CHEBI:43474"/>
        <dbReference type="ChEBI" id="CHEBI:57705"/>
        <dbReference type="ChEBI" id="CHEBI:58702"/>
        <dbReference type="ChEBI" id="CHEBI:68483"/>
        <dbReference type="EC" id="2.5.1.7"/>
    </reaction>
</comment>
<comment type="pathway">
    <text evidence="1">Cell wall biogenesis; peptidoglycan biosynthesis.</text>
</comment>
<comment type="subcellular location">
    <subcellularLocation>
        <location evidence="1">Cytoplasm</location>
    </subcellularLocation>
</comment>
<comment type="similarity">
    <text evidence="1">Belongs to the EPSP synthase family. MurA subfamily.</text>
</comment>
<comment type="sequence caution" evidence="2">
    <conflict type="erroneous initiation">
        <sequence resource="EMBL-CDS" id="AAV63090"/>
    </conflict>
</comment>
<sequence>MRKIIINGGKKLQGEVTVSGAKNSVVALIPAIILSDGVVTLDGVPAISDVDNLIEIIEVMGGSVKRDGETLEIDPRGVKDMPMPFGKINSLRASYYFYGSLLGRYGQAIVGLPGGCDLGPRPIDLHLKAFEAMGASIFYEGEAMRIATDAGQRIKGAHIYMDTVSVGATINTMLAAAKADGRTVIENAAREPEIIDVATLLNNMGARVRGAGTEVITIEGVESLHGTRHQVIPDRIEAGSYIAMAAAIGKGIKIKNVLYEHLESFICKLEAMGVRMTVEEDAIFVEEQGDLKPVDIKTSPYPGFATDLQQPMTPLLLKASGRGKIIDTIYEKRVNHVPELARMGADIQVLGGQIVYNGPTQLSGAPVKASDLRAGAALVTAGLMADGQTEITNIEFILRGYSNIIENLSDLGADIRLIED</sequence>
<protein>
    <recommendedName>
        <fullName evidence="1">UDP-N-acetylglucosamine 1-carboxyvinyltransferase 2</fullName>
        <ecNumber evidence="1">2.5.1.7</ecNumber>
    </recommendedName>
    <alternativeName>
        <fullName evidence="1">Enoylpyruvate transferase 2</fullName>
    </alternativeName>
    <alternativeName>
        <fullName evidence="1">UDP-N-acetylglucosamine enolpyruvyl transferase 2</fullName>
        <shortName evidence="1">EPT 2</shortName>
    </alternativeName>
</protein>
<keyword id="KW-0131">Cell cycle</keyword>
<keyword id="KW-0132">Cell division</keyword>
<keyword id="KW-0133">Cell shape</keyword>
<keyword id="KW-0961">Cell wall biogenesis/degradation</keyword>
<keyword id="KW-0963">Cytoplasm</keyword>
<keyword id="KW-0573">Peptidoglycan synthesis</keyword>
<keyword id="KW-0670">Pyruvate</keyword>
<keyword id="KW-0808">Transferase</keyword>
<name>MURA2_STRT1</name>
<proteinExistence type="inferred from homology"/>
<reference key="1">
    <citation type="journal article" date="2004" name="Nat. Biotechnol.">
        <title>Complete sequence and comparative genome analysis of the dairy bacterium Streptococcus thermophilus.</title>
        <authorList>
            <person name="Bolotin A."/>
            <person name="Quinquis B."/>
            <person name="Renault P."/>
            <person name="Sorokin A."/>
            <person name="Ehrlich S.D."/>
            <person name="Kulakauskas S."/>
            <person name="Lapidus A."/>
            <person name="Goltsman E."/>
            <person name="Mazur M."/>
            <person name="Pusch G.D."/>
            <person name="Fonstein M."/>
            <person name="Overbeek R."/>
            <person name="Kyprides N."/>
            <person name="Purnelle B."/>
            <person name="Prozzi D."/>
            <person name="Ngui K."/>
            <person name="Masuy D."/>
            <person name="Hancy F."/>
            <person name="Burteau S."/>
            <person name="Boutry M."/>
            <person name="Delcour J."/>
            <person name="Goffeau A."/>
            <person name="Hols P."/>
        </authorList>
    </citation>
    <scope>NUCLEOTIDE SEQUENCE [LARGE SCALE GENOMIC DNA]</scope>
    <source>
        <strain>CNRZ 1066</strain>
    </source>
</reference>
<accession>Q5LYL3</accession>